<sequence length="197" mass="21861">MPKVGMQPIRRSQLIHATLEAVDQVGMGDASIALIARLAGVSNGIISHYFQDKNGLLEATMRHLLSALSKAVRERRAALYDDSPRAHLRAIVEGNFDDSQVNGPAMKTWLAFWATSMHQPALRRLQRVNDHRLYSNLCYQFRRQLSADDARAAARGLAALIDGLWLRGALTGDAFDTDEALNIAYDYLDQQLAKQSG</sequence>
<organism>
    <name type="scientific">Pseudomonas aeruginosa (strain LESB58)</name>
    <dbReference type="NCBI Taxonomy" id="557722"/>
    <lineage>
        <taxon>Bacteria</taxon>
        <taxon>Pseudomonadati</taxon>
        <taxon>Pseudomonadota</taxon>
        <taxon>Gammaproteobacteria</taxon>
        <taxon>Pseudomonadales</taxon>
        <taxon>Pseudomonadaceae</taxon>
        <taxon>Pseudomonas</taxon>
    </lineage>
</organism>
<evidence type="ECO:0000250" key="1"/>
<evidence type="ECO:0000255" key="2">
    <source>
        <dbReference type="HAMAP-Rule" id="MF_00768"/>
    </source>
</evidence>
<protein>
    <recommendedName>
        <fullName evidence="2">HTH-type transcriptional regulator BetI</fullName>
    </recommendedName>
</protein>
<feature type="chain" id="PRO_1000133668" description="HTH-type transcriptional regulator BetI">
    <location>
        <begin position="1"/>
        <end position="197"/>
    </location>
</feature>
<feature type="domain" description="HTH tetR-type" evidence="2">
    <location>
        <begin position="8"/>
        <end position="68"/>
    </location>
</feature>
<feature type="DNA-binding region" description="H-T-H motif" evidence="2">
    <location>
        <begin position="31"/>
        <end position="50"/>
    </location>
</feature>
<accession>B7V5R5</accession>
<reference key="1">
    <citation type="journal article" date="2009" name="Genome Res.">
        <title>Newly introduced genomic prophage islands are critical determinants of in vivo competitiveness in the Liverpool epidemic strain of Pseudomonas aeruginosa.</title>
        <authorList>
            <person name="Winstanley C."/>
            <person name="Langille M.G.I."/>
            <person name="Fothergill J.L."/>
            <person name="Kukavica-Ibrulj I."/>
            <person name="Paradis-Bleau C."/>
            <person name="Sanschagrin F."/>
            <person name="Thomson N.R."/>
            <person name="Winsor G.L."/>
            <person name="Quail M.A."/>
            <person name="Lennard N."/>
            <person name="Bignell A."/>
            <person name="Clarke L."/>
            <person name="Seeger K."/>
            <person name="Saunders D."/>
            <person name="Harris D."/>
            <person name="Parkhill J."/>
            <person name="Hancock R.E.W."/>
            <person name="Brinkman F.S.L."/>
            <person name="Levesque R.C."/>
        </authorList>
    </citation>
    <scope>NUCLEOTIDE SEQUENCE [LARGE SCALE GENOMIC DNA]</scope>
    <source>
        <strain>LESB58</strain>
    </source>
</reference>
<proteinExistence type="inferred from homology"/>
<gene>
    <name evidence="2" type="primary">betI</name>
    <name type="ordered locus">PLES_57691</name>
</gene>
<name>BETI_PSEA8</name>
<dbReference type="EMBL" id="FM209186">
    <property type="protein sequence ID" value="CAW30523.1"/>
    <property type="molecule type" value="Genomic_DNA"/>
</dbReference>
<dbReference type="RefSeq" id="WP_003096684.1">
    <property type="nucleotide sequence ID" value="NC_011770.1"/>
</dbReference>
<dbReference type="SMR" id="B7V5R5"/>
<dbReference type="GeneID" id="77223910"/>
<dbReference type="KEGG" id="pag:PLES_57691"/>
<dbReference type="HOGENOM" id="CLU_069356_15_4_6"/>
<dbReference type="UniPathway" id="UPA00529"/>
<dbReference type="GO" id="GO:0003700">
    <property type="term" value="F:DNA-binding transcription factor activity"/>
    <property type="evidence" value="ECO:0007669"/>
    <property type="project" value="UniProtKB-UniRule"/>
</dbReference>
<dbReference type="GO" id="GO:0000976">
    <property type="term" value="F:transcription cis-regulatory region binding"/>
    <property type="evidence" value="ECO:0007669"/>
    <property type="project" value="TreeGrafter"/>
</dbReference>
<dbReference type="GO" id="GO:0019285">
    <property type="term" value="P:glycine betaine biosynthetic process from choline"/>
    <property type="evidence" value="ECO:0007669"/>
    <property type="project" value="UniProtKB-UniRule"/>
</dbReference>
<dbReference type="GO" id="GO:0045892">
    <property type="term" value="P:negative regulation of DNA-templated transcription"/>
    <property type="evidence" value="ECO:0007669"/>
    <property type="project" value="UniProtKB-UniRule"/>
</dbReference>
<dbReference type="Gene3D" id="1.10.357.10">
    <property type="entry name" value="Tetracycline Repressor, domain 2"/>
    <property type="match status" value="1"/>
</dbReference>
<dbReference type="HAMAP" id="MF_00768">
    <property type="entry name" value="HTH_type_BetI"/>
    <property type="match status" value="1"/>
</dbReference>
<dbReference type="InterPro" id="IPR039538">
    <property type="entry name" value="BetI_C"/>
</dbReference>
<dbReference type="InterPro" id="IPR023772">
    <property type="entry name" value="DNA-bd_HTH_TetR-type_CS"/>
</dbReference>
<dbReference type="InterPro" id="IPR009057">
    <property type="entry name" value="Homeodomain-like_sf"/>
</dbReference>
<dbReference type="InterPro" id="IPR050109">
    <property type="entry name" value="HTH-type_TetR-like_transc_reg"/>
</dbReference>
<dbReference type="InterPro" id="IPR001647">
    <property type="entry name" value="HTH_TetR"/>
</dbReference>
<dbReference type="InterPro" id="IPR036271">
    <property type="entry name" value="Tet_transcr_reg_TetR-rel_C_sf"/>
</dbReference>
<dbReference type="InterPro" id="IPR017757">
    <property type="entry name" value="Tscrpt_rep_BetI"/>
</dbReference>
<dbReference type="NCBIfam" id="TIGR03384">
    <property type="entry name" value="betaine_BetI"/>
    <property type="match status" value="1"/>
</dbReference>
<dbReference type="NCBIfam" id="NF001978">
    <property type="entry name" value="PRK00767.1"/>
    <property type="match status" value="1"/>
</dbReference>
<dbReference type="PANTHER" id="PTHR30055:SF234">
    <property type="entry name" value="HTH-TYPE TRANSCRIPTIONAL REGULATOR BETI"/>
    <property type="match status" value="1"/>
</dbReference>
<dbReference type="PANTHER" id="PTHR30055">
    <property type="entry name" value="HTH-TYPE TRANSCRIPTIONAL REGULATOR RUTR"/>
    <property type="match status" value="1"/>
</dbReference>
<dbReference type="Pfam" id="PF13977">
    <property type="entry name" value="TetR_C_6"/>
    <property type="match status" value="1"/>
</dbReference>
<dbReference type="Pfam" id="PF00440">
    <property type="entry name" value="TetR_N"/>
    <property type="match status" value="1"/>
</dbReference>
<dbReference type="SUPFAM" id="SSF46689">
    <property type="entry name" value="Homeodomain-like"/>
    <property type="match status" value="1"/>
</dbReference>
<dbReference type="SUPFAM" id="SSF48498">
    <property type="entry name" value="Tetracyclin repressor-like, C-terminal domain"/>
    <property type="match status" value="1"/>
</dbReference>
<dbReference type="PROSITE" id="PS01081">
    <property type="entry name" value="HTH_TETR_1"/>
    <property type="match status" value="1"/>
</dbReference>
<dbReference type="PROSITE" id="PS50977">
    <property type="entry name" value="HTH_TETR_2"/>
    <property type="match status" value="1"/>
</dbReference>
<keyword id="KW-0238">DNA-binding</keyword>
<keyword id="KW-0678">Repressor</keyword>
<keyword id="KW-0804">Transcription</keyword>
<keyword id="KW-0805">Transcription regulation</keyword>
<comment type="function">
    <text evidence="1">Repressor involved in the biosynthesis of the osmoprotectant glycine betaine. It represses transcription of the choline transporter BetT and the genes of BetAB involved in the synthesis of glycine betaine (By similarity).</text>
</comment>
<comment type="pathway">
    <text>Amine and polyamine biosynthesis; betaine biosynthesis via choline pathway [regulation].</text>
</comment>